<feature type="chain" id="PRO_0000180603" description="Glucose-6-phosphate isomerase">
    <location>
        <begin position="1"/>
        <end position="521"/>
    </location>
</feature>
<feature type="active site" description="Proton donor" evidence="1">
    <location>
        <position position="327"/>
    </location>
</feature>
<feature type="active site" evidence="1">
    <location>
        <position position="358"/>
    </location>
</feature>
<feature type="active site" evidence="1">
    <location>
        <position position="486"/>
    </location>
</feature>
<gene>
    <name evidence="1" type="primary">pgi</name>
    <name type="ordered locus">BB0884</name>
</gene>
<accession>Q7WP01</accession>
<name>G6PI_BORBR</name>
<comment type="function">
    <text evidence="1">Catalyzes the reversible isomerization of glucose-6-phosphate to fructose-6-phosphate.</text>
</comment>
<comment type="catalytic activity">
    <reaction evidence="1">
        <text>alpha-D-glucose 6-phosphate = beta-D-fructose 6-phosphate</text>
        <dbReference type="Rhea" id="RHEA:11816"/>
        <dbReference type="ChEBI" id="CHEBI:57634"/>
        <dbReference type="ChEBI" id="CHEBI:58225"/>
        <dbReference type="EC" id="5.3.1.9"/>
    </reaction>
</comment>
<comment type="pathway">
    <text evidence="1">Carbohydrate biosynthesis; gluconeogenesis.</text>
</comment>
<comment type="pathway">
    <text evidence="1">Carbohydrate degradation; glycolysis; D-glyceraldehyde 3-phosphate and glycerone phosphate from D-glucose: step 2/4.</text>
</comment>
<comment type="subcellular location">
    <subcellularLocation>
        <location evidence="1">Cytoplasm</location>
    </subcellularLocation>
</comment>
<comment type="similarity">
    <text evidence="1">Belongs to the GPI family.</text>
</comment>
<keyword id="KW-0963">Cytoplasm</keyword>
<keyword id="KW-0312">Gluconeogenesis</keyword>
<keyword id="KW-0324">Glycolysis</keyword>
<keyword id="KW-0413">Isomerase</keyword>
<protein>
    <recommendedName>
        <fullName evidence="1">Glucose-6-phosphate isomerase</fullName>
        <shortName evidence="1">GPI</shortName>
        <ecNumber evidence="1">5.3.1.9</ecNumber>
    </recommendedName>
    <alternativeName>
        <fullName evidence="1">Phosphoglucose isomerase</fullName>
        <shortName evidence="1">PGI</shortName>
    </alternativeName>
    <alternativeName>
        <fullName evidence="1">Phosphohexose isomerase</fullName>
        <shortName evidence="1">PHI</shortName>
    </alternativeName>
</protein>
<reference key="1">
    <citation type="journal article" date="2003" name="Nat. Genet.">
        <title>Comparative analysis of the genome sequences of Bordetella pertussis, Bordetella parapertussis and Bordetella bronchiseptica.</title>
        <authorList>
            <person name="Parkhill J."/>
            <person name="Sebaihia M."/>
            <person name="Preston A."/>
            <person name="Murphy L.D."/>
            <person name="Thomson N.R."/>
            <person name="Harris D.E."/>
            <person name="Holden M.T.G."/>
            <person name="Churcher C.M."/>
            <person name="Bentley S.D."/>
            <person name="Mungall K.L."/>
            <person name="Cerdeno-Tarraga A.-M."/>
            <person name="Temple L."/>
            <person name="James K.D."/>
            <person name="Harris B."/>
            <person name="Quail M.A."/>
            <person name="Achtman M."/>
            <person name="Atkin R."/>
            <person name="Baker S."/>
            <person name="Basham D."/>
            <person name="Bason N."/>
            <person name="Cherevach I."/>
            <person name="Chillingworth T."/>
            <person name="Collins M."/>
            <person name="Cronin A."/>
            <person name="Davis P."/>
            <person name="Doggett J."/>
            <person name="Feltwell T."/>
            <person name="Goble A."/>
            <person name="Hamlin N."/>
            <person name="Hauser H."/>
            <person name="Holroyd S."/>
            <person name="Jagels K."/>
            <person name="Leather S."/>
            <person name="Moule S."/>
            <person name="Norberczak H."/>
            <person name="O'Neil S."/>
            <person name="Ormond D."/>
            <person name="Price C."/>
            <person name="Rabbinowitsch E."/>
            <person name="Rutter S."/>
            <person name="Sanders M."/>
            <person name="Saunders D."/>
            <person name="Seeger K."/>
            <person name="Sharp S."/>
            <person name="Simmonds M."/>
            <person name="Skelton J."/>
            <person name="Squares R."/>
            <person name="Squares S."/>
            <person name="Stevens K."/>
            <person name="Unwin L."/>
            <person name="Whitehead S."/>
            <person name="Barrell B.G."/>
            <person name="Maskell D.J."/>
        </authorList>
    </citation>
    <scope>NUCLEOTIDE SEQUENCE [LARGE SCALE GENOMIC DNA]</scope>
    <source>
        <strain>ATCC BAA-588 / NCTC 13252 / RB50</strain>
    </source>
</reference>
<proteinExistence type="inferred from homology"/>
<organism>
    <name type="scientific">Bordetella bronchiseptica (strain ATCC BAA-588 / NCTC 13252 / RB50)</name>
    <name type="common">Alcaligenes bronchisepticus</name>
    <dbReference type="NCBI Taxonomy" id="257310"/>
    <lineage>
        <taxon>Bacteria</taxon>
        <taxon>Pseudomonadati</taxon>
        <taxon>Pseudomonadota</taxon>
        <taxon>Betaproteobacteria</taxon>
        <taxon>Burkholderiales</taxon>
        <taxon>Alcaligenaceae</taxon>
        <taxon>Bordetella</taxon>
    </lineage>
</organism>
<sequence>MPTPLPSSSAWLAFADAARHSSRRGARLRVIEAAGLRVDLTAQAHSDDLDSAAEDLLAQQDFDNARAQLFDGGPANWTEHRPAWHTALRAARPPTPVAGAILGERDRLRRFVQDADMRGAYRHVLHLGIGGSDWGPRMVTRALRHNGLKREVRFASNVDSHAVADALHHLDPHDTLIIVASKSFTTTEPLANAEVAMNWLRNAGVADPVRQVVAITANVDAALDFGISPQHIFRFWDWVGGRYSLWSAIGLPVALALGCDALDELLAGAAAMDQHFLHTPMRRNAPLQMALAGVANRSVLGYGSLAITPYDSRLTHLVPWAQQLEMESLGKVAGHDGSPAGVPTGPVVWGMTGTDCQHTFFQWLHQDTAGAPVDFIVCEQADHPYDHFHKLLIANCLAQRAALLRGKPFDEALKEARLVESDPQQAEILAHHRVHPGGRPSTLIMLPRLSAHALGALLAMYEHKVFAQGVLWGINPFDQWGVEYGKALARNIIRELENPSSEVNQQDPSTRYWIDALRKQP</sequence>
<dbReference type="EC" id="5.3.1.9" evidence="1"/>
<dbReference type="EMBL" id="BX640439">
    <property type="protein sequence ID" value="CAE31383.1"/>
    <property type="molecule type" value="Genomic_DNA"/>
</dbReference>
<dbReference type="RefSeq" id="WP_003808462.1">
    <property type="nucleotide sequence ID" value="NC_002927.3"/>
</dbReference>
<dbReference type="SMR" id="Q7WP01"/>
<dbReference type="GeneID" id="93202549"/>
<dbReference type="KEGG" id="bbr:BB0884"/>
<dbReference type="eggNOG" id="COG0166">
    <property type="taxonomic scope" value="Bacteria"/>
</dbReference>
<dbReference type="HOGENOM" id="CLU_017947_3_1_4"/>
<dbReference type="UniPathway" id="UPA00109">
    <property type="reaction ID" value="UER00181"/>
</dbReference>
<dbReference type="UniPathway" id="UPA00138"/>
<dbReference type="Proteomes" id="UP000001027">
    <property type="component" value="Chromosome"/>
</dbReference>
<dbReference type="GO" id="GO:0005829">
    <property type="term" value="C:cytosol"/>
    <property type="evidence" value="ECO:0007669"/>
    <property type="project" value="TreeGrafter"/>
</dbReference>
<dbReference type="GO" id="GO:0097367">
    <property type="term" value="F:carbohydrate derivative binding"/>
    <property type="evidence" value="ECO:0007669"/>
    <property type="project" value="InterPro"/>
</dbReference>
<dbReference type="GO" id="GO:0004347">
    <property type="term" value="F:glucose-6-phosphate isomerase activity"/>
    <property type="evidence" value="ECO:0007669"/>
    <property type="project" value="UniProtKB-UniRule"/>
</dbReference>
<dbReference type="GO" id="GO:0048029">
    <property type="term" value="F:monosaccharide binding"/>
    <property type="evidence" value="ECO:0007669"/>
    <property type="project" value="TreeGrafter"/>
</dbReference>
<dbReference type="GO" id="GO:0006094">
    <property type="term" value="P:gluconeogenesis"/>
    <property type="evidence" value="ECO:0007669"/>
    <property type="project" value="UniProtKB-UniRule"/>
</dbReference>
<dbReference type="GO" id="GO:0051156">
    <property type="term" value="P:glucose 6-phosphate metabolic process"/>
    <property type="evidence" value="ECO:0007669"/>
    <property type="project" value="TreeGrafter"/>
</dbReference>
<dbReference type="GO" id="GO:0006096">
    <property type="term" value="P:glycolytic process"/>
    <property type="evidence" value="ECO:0007669"/>
    <property type="project" value="UniProtKB-UniRule"/>
</dbReference>
<dbReference type="CDD" id="cd05015">
    <property type="entry name" value="SIS_PGI_1"/>
    <property type="match status" value="1"/>
</dbReference>
<dbReference type="CDD" id="cd05016">
    <property type="entry name" value="SIS_PGI_2"/>
    <property type="match status" value="1"/>
</dbReference>
<dbReference type="Gene3D" id="1.10.1390.10">
    <property type="match status" value="1"/>
</dbReference>
<dbReference type="Gene3D" id="3.40.50.10490">
    <property type="entry name" value="Glucose-6-phosphate isomerase like protein, domain 1"/>
    <property type="match status" value="2"/>
</dbReference>
<dbReference type="HAMAP" id="MF_00473">
    <property type="entry name" value="G6P_isomerase"/>
    <property type="match status" value="1"/>
</dbReference>
<dbReference type="InterPro" id="IPR001672">
    <property type="entry name" value="G6P_Isomerase"/>
</dbReference>
<dbReference type="InterPro" id="IPR023096">
    <property type="entry name" value="G6P_Isomerase_C"/>
</dbReference>
<dbReference type="InterPro" id="IPR018189">
    <property type="entry name" value="Phosphoglucose_isomerase_CS"/>
</dbReference>
<dbReference type="InterPro" id="IPR046348">
    <property type="entry name" value="SIS_dom_sf"/>
</dbReference>
<dbReference type="InterPro" id="IPR035476">
    <property type="entry name" value="SIS_PGI_1"/>
</dbReference>
<dbReference type="InterPro" id="IPR035482">
    <property type="entry name" value="SIS_PGI_2"/>
</dbReference>
<dbReference type="NCBIfam" id="NF001211">
    <property type="entry name" value="PRK00179.1"/>
    <property type="match status" value="1"/>
</dbReference>
<dbReference type="PANTHER" id="PTHR11469">
    <property type="entry name" value="GLUCOSE-6-PHOSPHATE ISOMERASE"/>
    <property type="match status" value="1"/>
</dbReference>
<dbReference type="PANTHER" id="PTHR11469:SF1">
    <property type="entry name" value="GLUCOSE-6-PHOSPHATE ISOMERASE"/>
    <property type="match status" value="1"/>
</dbReference>
<dbReference type="Pfam" id="PF00342">
    <property type="entry name" value="PGI"/>
    <property type="match status" value="1"/>
</dbReference>
<dbReference type="PRINTS" id="PR00662">
    <property type="entry name" value="G6PISOMERASE"/>
</dbReference>
<dbReference type="SUPFAM" id="SSF53697">
    <property type="entry name" value="SIS domain"/>
    <property type="match status" value="1"/>
</dbReference>
<dbReference type="PROSITE" id="PS00765">
    <property type="entry name" value="P_GLUCOSE_ISOMERASE_1"/>
    <property type="match status" value="1"/>
</dbReference>
<dbReference type="PROSITE" id="PS00174">
    <property type="entry name" value="P_GLUCOSE_ISOMERASE_2"/>
    <property type="match status" value="1"/>
</dbReference>
<dbReference type="PROSITE" id="PS51463">
    <property type="entry name" value="P_GLUCOSE_ISOMERASE_3"/>
    <property type="match status" value="1"/>
</dbReference>
<evidence type="ECO:0000255" key="1">
    <source>
        <dbReference type="HAMAP-Rule" id="MF_00473"/>
    </source>
</evidence>